<evidence type="ECO:0000255" key="1">
    <source>
        <dbReference type="HAMAP-Rule" id="MF_01376"/>
    </source>
</evidence>
<evidence type="ECO:0000269" key="2">
    <source>
    </source>
</evidence>
<evidence type="ECO:0000303" key="3">
    <source>
    </source>
</evidence>
<evidence type="ECO:0000305" key="4"/>
<evidence type="ECO:0000305" key="5">
    <source>
    </source>
</evidence>
<evidence type="ECO:0000312" key="6">
    <source>
        <dbReference type="EMBL" id="AAS11932.1"/>
    </source>
</evidence>
<evidence type="ECO:0007744" key="7">
    <source>
        <dbReference type="PDB" id="6PD1"/>
    </source>
</evidence>
<evidence type="ECO:0007744" key="8">
    <source>
        <dbReference type="PDB" id="6PD2"/>
    </source>
</evidence>
<evidence type="ECO:0007829" key="9">
    <source>
        <dbReference type="PDB" id="6PD2"/>
    </source>
</evidence>
<gene>
    <name evidence="3" type="primary">pntC</name>
    <name evidence="1" type="synonym">phnW</name>
    <name evidence="6" type="ordered locus">TDE_1415</name>
</gene>
<accession>Q73MU2</accession>
<reference key="1">
    <citation type="journal article" date="2004" name="Proc. Natl. Acad. Sci. U.S.A.">
        <title>Comparison of the genome of the oral pathogen Treponema denticola with other spirochete genomes.</title>
        <authorList>
            <person name="Seshadri R."/>
            <person name="Myers G.S.A."/>
            <person name="Tettelin H."/>
            <person name="Eisen J.A."/>
            <person name="Heidelberg J.F."/>
            <person name="Dodson R.J."/>
            <person name="Davidsen T.M."/>
            <person name="DeBoy R.T."/>
            <person name="Fouts D.E."/>
            <person name="Haft D.H."/>
            <person name="Selengut J."/>
            <person name="Ren Q."/>
            <person name="Brinkac L.M."/>
            <person name="Madupu R."/>
            <person name="Kolonay J.F."/>
            <person name="Durkin S.A."/>
            <person name="Daugherty S.C."/>
            <person name="Shetty J."/>
            <person name="Shvartsbeyn A."/>
            <person name="Gebregeorgis E."/>
            <person name="Geer K."/>
            <person name="Tsegaye G."/>
            <person name="Malek J.A."/>
            <person name="Ayodeji B."/>
            <person name="Shatsman S."/>
            <person name="McLeod M.P."/>
            <person name="Smajs D."/>
            <person name="Howell J.K."/>
            <person name="Pal S."/>
            <person name="Amin A."/>
            <person name="Vashisth P."/>
            <person name="McNeill T.Z."/>
            <person name="Xiang Q."/>
            <person name="Sodergren E."/>
            <person name="Baca E."/>
            <person name="Weinstock G.M."/>
            <person name="Norris S.J."/>
            <person name="Fraser C.M."/>
            <person name="Paulsen I.T."/>
        </authorList>
    </citation>
    <scope>NUCLEOTIDE SEQUENCE [LARGE SCALE GENOMIC DNA]</scope>
    <source>
        <strain>ATCC 35405 / DSM 14222 / CIP 103919 / JCM 8153 / KCTC 15104</strain>
    </source>
</reference>
<reference evidence="7 8" key="2">
    <citation type="journal article" date="2019" name="Nat. Commun.">
        <title>The predominance of nucleotidyl activation in bacterial phosphonate biosynthesis.</title>
        <authorList>
            <person name="Rice K."/>
            <person name="Batul K."/>
            <person name="Whiteside J."/>
            <person name="Kelso J."/>
            <person name="Papinski M."/>
            <person name="Schmidt E."/>
            <person name="Pratasouskaya A."/>
            <person name="Wang D."/>
            <person name="Sullivan R."/>
            <person name="Bartlett C."/>
            <person name="Weadge J.T."/>
            <person name="Van der Kamp M.W."/>
            <person name="Moreno-Hagelsieb G."/>
            <person name="Suits M.D."/>
            <person name="Horsman G.P."/>
        </authorList>
    </citation>
    <scope>X-RAY CRYSTALLOGRAPHY (1.95 ANGSTROMS) IN COMPLEXES WITH CMP-(2-AMINOETHYL)PHOSPHONATE; MAGNESIUM AND PYRIDOXAL PHOSPHATE</scope>
    <scope>FUNCTION</scope>
    <scope>CATALYTIC ACTIVITY</scope>
    <scope>COFACTOR</scope>
    <scope>ACTIVITY REGULATION</scope>
    <scope>BIOPHYSICOCHEMICAL PROPERTIES</scope>
    <scope>SUBUNIT</scope>
    <scope>MUTAGENESIS OF ARG-15; LYS-25 AND LYS-153</scope>
    <source>
        <strain>ATCC 35405 / DSM 14222 / CIP 103919 / JCM 8153 / KCTC 15104</strain>
    </source>
</reference>
<keyword id="KW-0002">3D-structure</keyword>
<keyword id="KW-0032">Aminotransferase</keyword>
<keyword id="KW-0460">Magnesium</keyword>
<keyword id="KW-0479">Metal-binding</keyword>
<keyword id="KW-0511">Multifunctional enzyme</keyword>
<keyword id="KW-0548">Nucleotidyltransferase</keyword>
<keyword id="KW-0663">Pyridoxal phosphate</keyword>
<keyword id="KW-0670">Pyruvate</keyword>
<keyword id="KW-1185">Reference proteome</keyword>
<keyword id="KW-0808">Transferase</keyword>
<keyword id="KW-0862">Zinc</keyword>
<comment type="function">
    <text evidence="2">Bifunctional transferase involved in the biosynthesis of cell-surface phosphonates (PubMed:31420548). The aminotransferase region catalyzes the transformation of phosphonoacetaldehyde (PnAA) to 2-aminoethylphosphonate (AEP) (PubMed:31420548). The cytidylyltransferase region catalyzes the activation of 2-aminoethylphosphonate (AEP) to CMP-2-aminoethylphosphonate (CMP-AEP) (PubMed:31420548). Cannot use phosphocholine (PubMed:31420548). Exhibits strong activity towards CTP, limited activity towards ATP and no activity with GTP (PubMed:31420548).</text>
</comment>
<comment type="catalytic activity">
    <reaction evidence="2">
        <text>(2-aminoethyl)phosphonate + CTP = CMP-(2-aminoethyl)phosphonate + diphosphate</text>
        <dbReference type="Rhea" id="RHEA:63448"/>
        <dbReference type="ChEBI" id="CHEBI:33019"/>
        <dbReference type="ChEBI" id="CHEBI:37563"/>
        <dbReference type="ChEBI" id="CHEBI:57418"/>
        <dbReference type="ChEBI" id="CHEBI:147307"/>
        <dbReference type="EC" id="2.7.7.107"/>
    </reaction>
    <physiologicalReaction direction="left-to-right" evidence="2">
        <dbReference type="Rhea" id="RHEA:63449"/>
    </physiologicalReaction>
</comment>
<comment type="catalytic activity">
    <reaction evidence="1 2">
        <text>(2-aminoethyl)phosphonate + pyruvate = phosphonoacetaldehyde + L-alanine</text>
        <dbReference type="Rhea" id="RHEA:17021"/>
        <dbReference type="ChEBI" id="CHEBI:15361"/>
        <dbReference type="ChEBI" id="CHEBI:57418"/>
        <dbReference type="ChEBI" id="CHEBI:57972"/>
        <dbReference type="ChEBI" id="CHEBI:58383"/>
        <dbReference type="EC" id="2.6.1.37"/>
    </reaction>
</comment>
<comment type="cofactor">
    <cofactor evidence="2">
        <name>Mg(2+)</name>
        <dbReference type="ChEBI" id="CHEBI:18420"/>
    </cofactor>
    <cofactor evidence="2">
        <name>Zn(2+)</name>
        <dbReference type="ChEBI" id="CHEBI:29105"/>
    </cofactor>
    <text evidence="2">Shows weaker cytidylyltransferase activity with Ca(2+).</text>
</comment>
<comment type="cofactor">
    <cofactor evidence="2">
        <name>pyridoxal 5'-phosphate</name>
        <dbReference type="ChEBI" id="CHEBI:597326"/>
    </cofactor>
</comment>
<comment type="activity regulation">
    <text evidence="2">Cytidylyltransferase activity is inhibited in the presence of EDTA and is restored by the addition of Mg(2+) or Zn(2+).</text>
</comment>
<comment type="biophysicochemical properties">
    <kinetics>
        <KM evidence="2">0.016 mM for 2-aminoethylphosphonate (for cytidylyltransferase activity)</KM>
        <text evidence="2">kcat is 1.05 sec(-1) with 2-aminoethylphosphonate as substrate for cytidylyltransferase activity.</text>
    </kinetics>
</comment>
<comment type="pathway">
    <text evidence="5">Phosphorus metabolism; phosphonate biosynthesis.</text>
</comment>
<comment type="subunit">
    <text evidence="2">Homodimer.</text>
</comment>
<comment type="similarity">
    <text evidence="4">In the N-terminal section; belongs to the LicC/PntC cytidylyltransferase family.</text>
</comment>
<comment type="similarity">
    <text evidence="4">In the C-terminal section; belongs to the class-V pyridoxal-phosphate-dependent aminotransferase family. PhnW subfamily.</text>
</comment>
<comment type="caution">
    <text evidence="5">The crystal structure does not show the Schiff base that is expected to form between Lys-441 and the pyridoxal phosphate cofactor.</text>
</comment>
<name>PNTCW_TREDE</name>
<dbReference type="EC" id="2.7.7.107" evidence="2"/>
<dbReference type="EC" id="2.6.1.37" evidence="1 2"/>
<dbReference type="EMBL" id="AE017226">
    <property type="protein sequence ID" value="AAS11932.1"/>
    <property type="molecule type" value="Genomic_DNA"/>
</dbReference>
<dbReference type="RefSeq" id="NP_972021.1">
    <property type="nucleotide sequence ID" value="NC_002967.9"/>
</dbReference>
<dbReference type="RefSeq" id="WP_002679016.1">
    <property type="nucleotide sequence ID" value="NC_002967.9"/>
</dbReference>
<dbReference type="PDB" id="6PD1">
    <property type="method" value="X-ray"/>
    <property type="resolution" value="2.72 A"/>
    <property type="chains" value="A/B/C/D=1-616"/>
</dbReference>
<dbReference type="PDB" id="6PD2">
    <property type="method" value="X-ray"/>
    <property type="resolution" value="1.95 A"/>
    <property type="chains" value="A/B/C/D=1-616"/>
</dbReference>
<dbReference type="PDBsum" id="6PD1"/>
<dbReference type="PDBsum" id="6PD2"/>
<dbReference type="SMR" id="Q73MU2"/>
<dbReference type="STRING" id="243275.TDE_1415"/>
<dbReference type="PaxDb" id="243275-TDE_1415"/>
<dbReference type="GeneID" id="2739692"/>
<dbReference type="KEGG" id="tde:TDE_1415"/>
<dbReference type="PATRIC" id="fig|243275.7.peg.1357"/>
<dbReference type="eggNOG" id="COG0075">
    <property type="taxonomic scope" value="Bacteria"/>
</dbReference>
<dbReference type="eggNOG" id="COG1213">
    <property type="taxonomic scope" value="Bacteria"/>
</dbReference>
<dbReference type="HOGENOM" id="CLU_512800_0_0_12"/>
<dbReference type="OrthoDB" id="389074at2"/>
<dbReference type="UniPathway" id="UPA00960"/>
<dbReference type="Proteomes" id="UP000008212">
    <property type="component" value="Chromosome"/>
</dbReference>
<dbReference type="GO" id="GO:0047304">
    <property type="term" value="F:2-aminoethylphosphonate-pyruvate transaminase activity"/>
    <property type="evidence" value="ECO:0007669"/>
    <property type="project" value="InterPro"/>
</dbReference>
<dbReference type="GO" id="GO:0046872">
    <property type="term" value="F:metal ion binding"/>
    <property type="evidence" value="ECO:0007669"/>
    <property type="project" value="UniProtKB-KW"/>
</dbReference>
<dbReference type="GO" id="GO:0016779">
    <property type="term" value="F:nucleotidyltransferase activity"/>
    <property type="evidence" value="ECO:0007669"/>
    <property type="project" value="UniProtKB-KW"/>
</dbReference>
<dbReference type="GO" id="GO:0032923">
    <property type="term" value="P:organic phosphonate biosynthetic process"/>
    <property type="evidence" value="ECO:0007669"/>
    <property type="project" value="UniProtKB-UniPathway"/>
</dbReference>
<dbReference type="GO" id="GO:0019700">
    <property type="term" value="P:organic phosphonate catabolic process"/>
    <property type="evidence" value="ECO:0007669"/>
    <property type="project" value="InterPro"/>
</dbReference>
<dbReference type="CDD" id="cd02523">
    <property type="entry name" value="PC_cytidylyltransferase"/>
    <property type="match status" value="1"/>
</dbReference>
<dbReference type="Gene3D" id="3.90.1150.10">
    <property type="entry name" value="Aspartate Aminotransferase, domain 1"/>
    <property type="match status" value="1"/>
</dbReference>
<dbReference type="Gene3D" id="3.90.550.10">
    <property type="entry name" value="Spore Coat Polysaccharide Biosynthesis Protein SpsA, Chain A"/>
    <property type="match status" value="1"/>
</dbReference>
<dbReference type="Gene3D" id="3.40.640.10">
    <property type="entry name" value="Type I PLP-dependent aspartate aminotransferase-like (Major domain)"/>
    <property type="match status" value="1"/>
</dbReference>
<dbReference type="HAMAP" id="MF_01376">
    <property type="entry name" value="PhnW_aminotrans_5"/>
    <property type="match status" value="1"/>
</dbReference>
<dbReference type="InterPro" id="IPR000192">
    <property type="entry name" value="Aminotrans_V_dom"/>
</dbReference>
<dbReference type="InterPro" id="IPR025877">
    <property type="entry name" value="MobA-like_NTP_Trfase"/>
</dbReference>
<dbReference type="InterPro" id="IPR012703">
    <property type="entry name" value="NH2EtPonate_pyrv_transaminase"/>
</dbReference>
<dbReference type="InterPro" id="IPR029044">
    <property type="entry name" value="Nucleotide-diphossugar_trans"/>
</dbReference>
<dbReference type="InterPro" id="IPR015424">
    <property type="entry name" value="PyrdxlP-dep_Trfase"/>
</dbReference>
<dbReference type="InterPro" id="IPR015421">
    <property type="entry name" value="PyrdxlP-dep_Trfase_major"/>
</dbReference>
<dbReference type="InterPro" id="IPR015422">
    <property type="entry name" value="PyrdxlP-dep_Trfase_small"/>
</dbReference>
<dbReference type="NCBIfam" id="TIGR03301">
    <property type="entry name" value="PhnW-AepZ"/>
    <property type="match status" value="1"/>
</dbReference>
<dbReference type="NCBIfam" id="NF010006">
    <property type="entry name" value="PRK13479.1"/>
    <property type="match status" value="1"/>
</dbReference>
<dbReference type="PANTHER" id="PTHR42778">
    <property type="entry name" value="2-AMINOETHYLPHOSPHONATE--PYRUVATE TRANSAMINASE"/>
    <property type="match status" value="1"/>
</dbReference>
<dbReference type="PANTHER" id="PTHR42778:SF1">
    <property type="entry name" value="2-AMINOETHYLPHOSPHONATE--PYRUVATE TRANSAMINASE"/>
    <property type="match status" value="1"/>
</dbReference>
<dbReference type="Pfam" id="PF00266">
    <property type="entry name" value="Aminotran_5"/>
    <property type="match status" value="1"/>
</dbReference>
<dbReference type="Pfam" id="PF12804">
    <property type="entry name" value="NTP_transf_3"/>
    <property type="match status" value="1"/>
</dbReference>
<dbReference type="SUPFAM" id="SSF53448">
    <property type="entry name" value="Nucleotide-diphospho-sugar transferases"/>
    <property type="match status" value="1"/>
</dbReference>
<dbReference type="SUPFAM" id="SSF53383">
    <property type="entry name" value="PLP-dependent transferases"/>
    <property type="match status" value="1"/>
</dbReference>
<sequence>MIKQAVILAGGLGSRLKDKTKTMPKGFLEIGGTAIVEQSVQKLLAHGIEKIVIGTGHCNEYYDNLAKKYPAIITVKNENYANTGSMGTLEVCASFVNESFLLLESDLIYDSAGLFSLINDERKNLILASGATKSGDEVYLEADEKNCLTGLSKNRDALKNIFGELVGITKLTKSTLDKMCAYAKIHHSDLPKMEYEHALLEAAKTIPVAIKRIEYFVWREIDNEDHLEMAVKNIYPHIVENEKLRAVRREVLLNPGPATTTDSVKYAQVSADICPREKAFGDLMQWLCDELKLFALASETNPDEYETVMFGCSGTGADEVMVSSCVPDTGRLLVIDNGSYGARMAKIADIYKIPMDIFKSSTYEPLDLQKLEAEFATKKYTHLACVYHETTTGLLNPLHIICPMAKKYGMVTIVDAVSAYCGMPMDLKSLGIDFMASTSNKNIQGMAGVGFVICNKAELEKTKDYPMRNYYLNLYDQYAYFAKTHQTRFTPPVQTMYALRQAVLETKQETVQKRYERYTACWNILVAAIKKLGLKMLVKEEHQSHFITAILEPETPKYSFEALHDFAAEHSFTIYPGKLGNIDTFRIANIGDIQPEEMRRFTVKLKEYMNGIGVGV</sequence>
<protein>
    <recommendedName>
        <fullName evidence="4">Bifunctional 2-aminoethylphosphonate cytidylyltransferase/aminotransferase</fullName>
    </recommendedName>
    <domain>
        <recommendedName>
            <fullName evidence="4">2-aminoethylphosphonate cytidylyltransferase</fullName>
            <shortName evidence="3">AEP cytidylyltransferase</shortName>
            <ecNumber evidence="2">2.7.7.107</ecNumber>
        </recommendedName>
        <alternativeName>
            <fullName evidence="3">Phosphonate-specific cytidylyltransferase</fullName>
        </alternativeName>
        <alternativeName>
            <fullName evidence="3">Phosphonyl tailoring cytidylyltransferase</fullName>
        </alternativeName>
        <alternativeName>
            <fullName evidence="3">Tde-PntC</fullName>
        </alternativeName>
    </domain>
    <domain>
        <recommendedName>
            <fullName evidence="1">2-aminoethylphosphonate--pyruvate transaminase</fullName>
            <ecNumber evidence="1 2">2.6.1.37</ecNumber>
        </recommendedName>
        <alternativeName>
            <fullName evidence="1">2-aminoethylphosphonate aminotransferase</fullName>
        </alternativeName>
        <alternativeName>
            <fullName evidence="1 3">AEP transaminase</fullName>
            <shortName evidence="1 3">AEPT</shortName>
        </alternativeName>
    </domain>
</protein>
<proteinExistence type="evidence at protein level"/>
<organism>
    <name type="scientific">Treponema denticola (strain ATCC 35405 / DSM 14222 / CIP 103919 / JCM 8153 / KCTC 15104)</name>
    <dbReference type="NCBI Taxonomy" id="243275"/>
    <lineage>
        <taxon>Bacteria</taxon>
        <taxon>Pseudomonadati</taxon>
        <taxon>Spirochaetota</taxon>
        <taxon>Spirochaetia</taxon>
        <taxon>Spirochaetales</taxon>
        <taxon>Treponemataceae</taxon>
        <taxon>Treponema</taxon>
    </lineage>
</organism>
<feature type="chain" id="PRO_0000459659" description="Bifunctional 2-aminoethylphosphonate cytidylyltransferase/aminotransferase">
    <location>
        <begin position="1"/>
        <end position="616"/>
    </location>
</feature>
<feature type="region of interest" description="2-aminoethylphosphonate cytidylyltransferase" evidence="4">
    <location>
        <begin position="1"/>
        <end position="240"/>
    </location>
</feature>
<feature type="region of interest" description="2-aminoethylphosphonate aminotransferase" evidence="4">
    <location>
        <begin position="250"/>
        <end position="616"/>
    </location>
</feature>
<feature type="binding site" evidence="2 8">
    <location>
        <position position="8"/>
    </location>
    <ligand>
        <name>CMP-(2-aminoethyl)phosphonate</name>
        <dbReference type="ChEBI" id="CHEBI:147307"/>
    </ligand>
</feature>
<feature type="binding site" evidence="2 8">
    <location>
        <position position="10"/>
    </location>
    <ligand>
        <name>CMP-(2-aminoethyl)phosphonate</name>
        <dbReference type="ChEBI" id="CHEBI:147307"/>
    </ligand>
</feature>
<feature type="binding site" evidence="2 8">
    <location>
        <position position="11"/>
    </location>
    <ligand>
        <name>CMP-(2-aminoethyl)phosphonate</name>
        <dbReference type="ChEBI" id="CHEBI:147307"/>
    </ligand>
</feature>
<feature type="binding site" evidence="2 8">
    <location>
        <position position="25"/>
    </location>
    <ligand>
        <name>CMP-(2-aminoethyl)phosphonate</name>
        <dbReference type="ChEBI" id="CHEBI:147307"/>
    </ligand>
</feature>
<feature type="binding site" evidence="2 8">
    <location>
        <position position="83"/>
    </location>
    <ligand>
        <name>CMP-(2-aminoethyl)phosphonate</name>
        <dbReference type="ChEBI" id="CHEBI:147307"/>
    </ligand>
</feature>
<feature type="binding site" evidence="2 8">
    <location>
        <position position="88"/>
    </location>
    <ligand>
        <name>CMP-(2-aminoethyl)phosphonate</name>
        <dbReference type="ChEBI" id="CHEBI:147307"/>
    </ligand>
</feature>
<feature type="binding site" evidence="2 8">
    <location>
        <position position="104"/>
    </location>
    <ligand>
        <name>CMP-(2-aminoethyl)phosphonate</name>
        <dbReference type="ChEBI" id="CHEBI:147307"/>
    </ligand>
</feature>
<feature type="binding site" evidence="2 8">
    <location>
        <position position="105"/>
    </location>
    <ligand>
        <name>CMP-(2-aminoethyl)phosphonate</name>
        <dbReference type="ChEBI" id="CHEBI:147307"/>
    </ligand>
</feature>
<feature type="binding site" evidence="2 8">
    <location>
        <position position="106"/>
    </location>
    <ligand>
        <name>Mg(2+)</name>
        <dbReference type="ChEBI" id="CHEBI:18420"/>
        <label>1</label>
    </ligand>
</feature>
<feature type="binding site" evidence="2 8">
    <location>
        <position position="136"/>
    </location>
    <ligand>
        <name>CMP-(2-aminoethyl)phosphonate</name>
        <dbReference type="ChEBI" id="CHEBI:147307"/>
    </ligand>
</feature>
<feature type="binding site" evidence="2 8">
    <location>
        <position position="136"/>
    </location>
    <ligand>
        <name>Mg(2+)</name>
        <dbReference type="ChEBI" id="CHEBI:18420"/>
        <label>2</label>
    </ligand>
</feature>
<feature type="binding site" evidence="2 8">
    <location>
        <position position="153"/>
    </location>
    <ligand>
        <name>CMP-(2-aminoethyl)phosphonate</name>
        <dbReference type="ChEBI" id="CHEBI:147307"/>
    </ligand>
</feature>
<feature type="binding site" evidence="2 8">
    <location>
        <position position="196"/>
    </location>
    <ligand>
        <name>CMP-(2-aminoethyl)phosphonate</name>
        <dbReference type="ChEBI" id="CHEBI:147307"/>
    </ligand>
</feature>
<feature type="binding site" evidence="2 8">
    <location>
        <position position="220"/>
    </location>
    <ligand>
        <name>Mg(2+)</name>
        <dbReference type="ChEBI" id="CHEBI:18420"/>
        <label>1</label>
    </ligand>
</feature>
<feature type="binding site" evidence="2 8">
    <location>
        <position position="220"/>
    </location>
    <ligand>
        <name>Mg(2+)</name>
        <dbReference type="ChEBI" id="CHEBI:18420"/>
        <label>2</label>
    </ligand>
</feature>
<feature type="binding site" evidence="2 8">
    <location>
        <position position="222"/>
    </location>
    <ligand>
        <name>Mg(2+)</name>
        <dbReference type="ChEBI" id="CHEBI:18420"/>
        <label>1</label>
    </ligand>
</feature>
<feature type="binding site" evidence="2 8">
    <location>
        <position position="222"/>
    </location>
    <ligand>
        <name>Mg(2+)</name>
        <dbReference type="ChEBI" id="CHEBI:18420"/>
        <label>2</label>
    </ligand>
</feature>
<feature type="binding site" evidence="2 8">
    <location>
        <position position="313"/>
    </location>
    <ligand>
        <name>pyridoxal 5'-phosphate</name>
        <dbReference type="ChEBI" id="CHEBI:597326"/>
    </ligand>
</feature>
<feature type="binding site" evidence="2 8">
    <location>
        <position position="314"/>
    </location>
    <ligand>
        <name>pyridoxal 5'-phosphate</name>
        <dbReference type="ChEBI" id="CHEBI:597326"/>
    </ligand>
</feature>
<feature type="binding site" evidence="2 8">
    <location>
        <position position="315"/>
    </location>
    <ligand>
        <name>pyridoxal 5'-phosphate</name>
        <dbReference type="ChEBI" id="CHEBI:597326"/>
    </ligand>
</feature>
<feature type="binding site" evidence="2 8">
    <location>
        <position position="390"/>
    </location>
    <ligand>
        <name>pyridoxal 5'-phosphate</name>
        <dbReference type="ChEBI" id="CHEBI:597326"/>
    </ligand>
</feature>
<feature type="binding site" evidence="2 8">
    <location>
        <position position="441"/>
    </location>
    <ligand>
        <name>pyridoxal 5'-phosphate</name>
        <dbReference type="ChEBI" id="CHEBI:597326"/>
    </ligand>
</feature>
<feature type="binding site" evidence="2 8">
    <location>
        <position position="490"/>
    </location>
    <ligand>
        <name>pyridoxal 5'-phosphate</name>
        <dbReference type="ChEBI" id="CHEBI:597326"/>
    </ligand>
</feature>
<feature type="mutagenesis site" description="Strong decrease in cytidylyltransferase activity." evidence="2">
    <original>R</original>
    <variation>A</variation>
    <location>
        <position position="15"/>
    </location>
</feature>
<feature type="mutagenesis site" description="Almost loss of cytidylyltransferase activity." evidence="2">
    <original>K</original>
    <variation>A</variation>
    <location>
        <position position="25"/>
    </location>
</feature>
<feature type="mutagenesis site" description="Strong decrease in cytidylyltransferase activity." evidence="2">
    <original>K</original>
    <variation>A</variation>
    <location>
        <position position="153"/>
    </location>
</feature>
<feature type="strand" evidence="9">
    <location>
        <begin position="4"/>
        <end position="9"/>
    </location>
</feature>
<feature type="helix" evidence="9">
    <location>
        <begin position="14"/>
        <end position="20"/>
    </location>
</feature>
<feature type="strand" evidence="9">
    <location>
        <begin position="21"/>
        <end position="23"/>
    </location>
</feature>
<feature type="helix" evidence="9">
    <location>
        <begin position="25"/>
        <end position="27"/>
    </location>
</feature>
<feature type="helix" evidence="9">
    <location>
        <begin position="35"/>
        <end position="45"/>
    </location>
</feature>
<feature type="strand" evidence="9">
    <location>
        <begin position="50"/>
        <end position="55"/>
    </location>
</feature>
<feature type="turn" evidence="9">
    <location>
        <begin position="57"/>
        <end position="59"/>
    </location>
</feature>
<feature type="helix" evidence="9">
    <location>
        <begin position="60"/>
        <end position="68"/>
    </location>
</feature>
<feature type="strand" evidence="9">
    <location>
        <begin position="72"/>
        <end position="76"/>
    </location>
</feature>
<feature type="helix" evidence="9">
    <location>
        <begin position="80"/>
        <end position="82"/>
    </location>
</feature>
<feature type="helix" evidence="9">
    <location>
        <begin position="85"/>
        <end position="92"/>
    </location>
</feature>
<feature type="helix" evidence="9">
    <location>
        <begin position="93"/>
        <end position="95"/>
    </location>
</feature>
<feature type="strand" evidence="9">
    <location>
        <begin position="100"/>
        <end position="104"/>
    </location>
</feature>
<feature type="strand" evidence="9">
    <location>
        <begin position="107"/>
        <end position="109"/>
    </location>
</feature>
<feature type="helix" evidence="9">
    <location>
        <begin position="112"/>
        <end position="118"/>
    </location>
</feature>
<feature type="strand" evidence="9">
    <location>
        <begin position="123"/>
        <end position="130"/>
    </location>
</feature>
<feature type="strand" evidence="9">
    <location>
        <begin position="139"/>
        <end position="142"/>
    </location>
</feature>
<feature type="strand" evidence="9">
    <location>
        <begin position="146"/>
        <end position="154"/>
    </location>
</feature>
<feature type="helix" evidence="9">
    <location>
        <begin position="155"/>
        <end position="157"/>
    </location>
</feature>
<feature type="strand" evidence="9">
    <location>
        <begin position="163"/>
        <end position="171"/>
    </location>
</feature>
<feature type="helix" evidence="9">
    <location>
        <begin position="173"/>
        <end position="185"/>
    </location>
</feature>
<feature type="turn" evidence="9">
    <location>
        <begin position="186"/>
        <end position="189"/>
    </location>
</feature>
<feature type="helix" evidence="9">
    <location>
        <begin position="195"/>
        <end position="202"/>
    </location>
</feature>
<feature type="turn" evidence="9">
    <location>
        <begin position="203"/>
        <end position="205"/>
    </location>
</feature>
<feature type="strand" evidence="9">
    <location>
        <begin position="209"/>
        <end position="213"/>
    </location>
</feature>
<feature type="strand" evidence="9">
    <location>
        <begin position="218"/>
        <end position="220"/>
    </location>
</feature>
<feature type="helix" evidence="9">
    <location>
        <begin position="224"/>
        <end position="232"/>
    </location>
</feature>
<feature type="helix" evidence="9">
    <location>
        <begin position="234"/>
        <end position="244"/>
    </location>
</feature>
<feature type="strand" evidence="9">
    <location>
        <begin position="254"/>
        <end position="257"/>
    </location>
</feature>
<feature type="helix" evidence="9">
    <location>
        <begin position="262"/>
        <end position="266"/>
    </location>
</feature>
<feature type="helix" evidence="9">
    <location>
        <begin position="278"/>
        <end position="293"/>
    </location>
</feature>
<feature type="helix" evidence="9">
    <location>
        <begin position="302"/>
        <end position="304"/>
    </location>
</feature>
<feature type="strand" evidence="9">
    <location>
        <begin position="305"/>
        <end position="312"/>
    </location>
</feature>
<feature type="helix" evidence="9">
    <location>
        <begin position="314"/>
        <end position="325"/>
    </location>
</feature>
<feature type="strand" evidence="9">
    <location>
        <begin position="332"/>
        <end position="338"/>
    </location>
</feature>
<feature type="helix" evidence="9">
    <location>
        <begin position="339"/>
        <end position="350"/>
    </location>
</feature>
<feature type="strand" evidence="9">
    <location>
        <begin position="355"/>
        <end position="359"/>
    </location>
</feature>
<feature type="strand" evidence="9">
    <location>
        <begin position="362"/>
        <end position="364"/>
    </location>
</feature>
<feature type="helix" evidence="9">
    <location>
        <begin position="368"/>
        <end position="376"/>
    </location>
</feature>
<feature type="strand" evidence="9">
    <location>
        <begin position="381"/>
        <end position="388"/>
    </location>
</feature>
<feature type="turn" evidence="9">
    <location>
        <begin position="390"/>
        <end position="392"/>
    </location>
</feature>
<feature type="helix" evidence="9">
    <location>
        <begin position="398"/>
        <end position="407"/>
    </location>
</feature>
<feature type="strand" evidence="9">
    <location>
        <begin position="411"/>
        <end position="415"/>
    </location>
</feature>
<feature type="turn" evidence="9">
    <location>
        <begin position="417"/>
        <end position="419"/>
    </location>
</feature>
<feature type="turn" evidence="9">
    <location>
        <begin position="427"/>
        <end position="431"/>
    </location>
</feature>
<feature type="strand" evidence="9">
    <location>
        <begin position="433"/>
        <end position="438"/>
    </location>
</feature>
<feature type="strand" evidence="9">
    <location>
        <begin position="449"/>
        <end position="455"/>
    </location>
</feature>
<feature type="helix" evidence="9">
    <location>
        <begin position="456"/>
        <end position="461"/>
    </location>
</feature>
<feature type="turn" evidence="9">
    <location>
        <begin position="462"/>
        <end position="464"/>
    </location>
</feature>
<feature type="helix" evidence="9">
    <location>
        <begin position="474"/>
        <end position="484"/>
    </location>
</feature>
<feature type="helix" evidence="9">
    <location>
        <begin position="493"/>
        <end position="509"/>
    </location>
</feature>
<feature type="helix" evidence="9">
    <location>
        <begin position="511"/>
        <end position="531"/>
    </location>
</feature>
<feature type="strand" evidence="9">
    <location>
        <begin position="536"/>
        <end position="538"/>
    </location>
</feature>
<feature type="helix" evidence="9">
    <location>
        <begin position="540"/>
        <end position="542"/>
    </location>
</feature>
<feature type="strand" evidence="9">
    <location>
        <begin position="545"/>
        <end position="551"/>
    </location>
</feature>
<feature type="helix" evidence="9">
    <location>
        <begin position="560"/>
        <end position="569"/>
    </location>
</feature>
<feature type="strand" evidence="9">
    <location>
        <begin position="580"/>
        <end position="582"/>
    </location>
</feature>
<feature type="strand" evidence="9">
    <location>
        <begin position="584"/>
        <end position="588"/>
    </location>
</feature>
<feature type="helix" evidence="9">
    <location>
        <begin position="595"/>
        <end position="611"/>
    </location>
</feature>